<feature type="chain" id="PRO_0000128718" description="Malate:quinone oxidoreductase">
    <location>
        <begin position="1"/>
        <end position="450"/>
    </location>
</feature>
<sequence>MSMEFDAVIIGGGVSGCATFYTLSEYSSLKRVAIVEKCSKLAQISSSAKANSQTIHDGSIETNYTPEKAKKVRLSAYKTRQYALNKGLQNEVIFETQKMAIGVGDEECEFMKKRYESFKEIFVGLEEFDKQKIKELEPNVILGANGIDRHENIIGHGYRKDWSTMNFAKLSENFVEEALKLKPNNQVFLNFKVKKIEKRNDTYAVISEDAEEVYAKFVLVNAGSYALPLAQSMGYGLDLGCLPVAGSFYFVPDLLRGKVYTVQNPKLPFAAVHGDPDAVIKGKTRIGPTALTMPKLERNKCWLKGISLELLKMDLNRDVFKIAFDLMSDKEIRNYVFKNMVFELPIIGKRKFLKDAQKIIPTLSLEDLEYAHGFGEVRPQVLDRTKRKLELGEKKICTHKGITFNMTPSPGATSCLQNALVDSQEIAAYLGESFELERFYKDLSPEELEN</sequence>
<protein>
    <recommendedName>
        <fullName>Malate:quinone oxidoreductase</fullName>
        <ecNumber>1.1.5.4</ecNumber>
    </recommendedName>
    <alternativeName>
        <fullName>MQO</fullName>
    </alternativeName>
    <alternativeName>
        <fullName>Malate dehydrogenase [quinone]</fullName>
    </alternativeName>
</protein>
<name>MQO_HELPJ</name>
<comment type="function">
    <text evidence="1">Catalyzes oxidation of malate to oxaloacetate in the citric acid cycle. Donates electrons to quinones of the electron transfer chain (By similarity).</text>
</comment>
<comment type="catalytic activity">
    <reaction>
        <text>(S)-malate + a quinone = a quinol + oxaloacetate</text>
        <dbReference type="Rhea" id="RHEA:46012"/>
        <dbReference type="ChEBI" id="CHEBI:15589"/>
        <dbReference type="ChEBI" id="CHEBI:16452"/>
        <dbReference type="ChEBI" id="CHEBI:24646"/>
        <dbReference type="ChEBI" id="CHEBI:132124"/>
        <dbReference type="EC" id="1.1.5.4"/>
    </reaction>
</comment>
<comment type="cofactor">
    <cofactor evidence="1">
        <name>FAD</name>
        <dbReference type="ChEBI" id="CHEBI:57692"/>
    </cofactor>
    <text evidence="1">The FAD is tightly bound.</text>
</comment>
<comment type="pathway">
    <text>Carbohydrate metabolism; tricarboxylic acid cycle; oxaloacetate from (S)-malate (quinone route): step 1/1.</text>
</comment>
<comment type="subcellular location">
    <subcellularLocation>
        <location evidence="1">Cell membrane</location>
        <topology evidence="1">Peripheral membrane protein</topology>
    </subcellularLocation>
</comment>
<comment type="similarity">
    <text evidence="2">Belongs to the MQO family.</text>
</comment>
<gene>
    <name type="primary">mqo</name>
    <name type="ordered locus">jhp_0079</name>
</gene>
<keyword id="KW-1003">Cell membrane</keyword>
<keyword id="KW-0274">FAD</keyword>
<keyword id="KW-0285">Flavoprotein</keyword>
<keyword id="KW-0472">Membrane</keyword>
<keyword id="KW-0560">Oxidoreductase</keyword>
<keyword id="KW-0816">Tricarboxylic acid cycle</keyword>
<proteinExistence type="inferred from homology"/>
<reference key="1">
    <citation type="journal article" date="1999" name="Nature">
        <title>Genomic sequence comparison of two unrelated isolates of the human gastric pathogen Helicobacter pylori.</title>
        <authorList>
            <person name="Alm R.A."/>
            <person name="Ling L.-S.L."/>
            <person name="Moir D.T."/>
            <person name="King B.L."/>
            <person name="Brown E.D."/>
            <person name="Doig P.C."/>
            <person name="Smith D.R."/>
            <person name="Noonan B."/>
            <person name="Guild B.C."/>
            <person name="deJonge B.L."/>
            <person name="Carmel G."/>
            <person name="Tummino P.J."/>
            <person name="Caruso A."/>
            <person name="Uria-Nickelsen M."/>
            <person name="Mills D.M."/>
            <person name="Ives C."/>
            <person name="Gibson R."/>
            <person name="Merberg D."/>
            <person name="Mills S.D."/>
            <person name="Jiang Q."/>
            <person name="Taylor D.E."/>
            <person name="Vovis G.F."/>
            <person name="Trust T.J."/>
        </authorList>
    </citation>
    <scope>NUCLEOTIDE SEQUENCE [LARGE SCALE GENOMIC DNA]</scope>
    <source>
        <strain>J99 / ATCC 700824</strain>
    </source>
</reference>
<dbReference type="EC" id="1.1.5.4"/>
<dbReference type="EMBL" id="AE001439">
    <property type="protein sequence ID" value="AAD05663.1"/>
    <property type="molecule type" value="Genomic_DNA"/>
</dbReference>
<dbReference type="PIR" id="B71976">
    <property type="entry name" value="B71976"/>
</dbReference>
<dbReference type="RefSeq" id="WP_000061443.1">
    <property type="nucleotide sequence ID" value="NC_000921.1"/>
</dbReference>
<dbReference type="SMR" id="Q9ZMY5"/>
<dbReference type="KEGG" id="hpj:jhp_0079"/>
<dbReference type="eggNOG" id="COG0579">
    <property type="taxonomic scope" value="Bacteria"/>
</dbReference>
<dbReference type="UniPathway" id="UPA00223">
    <property type="reaction ID" value="UER01008"/>
</dbReference>
<dbReference type="Proteomes" id="UP000000804">
    <property type="component" value="Chromosome"/>
</dbReference>
<dbReference type="GO" id="GO:0005737">
    <property type="term" value="C:cytoplasm"/>
    <property type="evidence" value="ECO:0007669"/>
    <property type="project" value="TreeGrafter"/>
</dbReference>
<dbReference type="GO" id="GO:0005886">
    <property type="term" value="C:plasma membrane"/>
    <property type="evidence" value="ECO:0007669"/>
    <property type="project" value="UniProtKB-SubCell"/>
</dbReference>
<dbReference type="GO" id="GO:0047545">
    <property type="term" value="F:2-hydroxyglutarate dehydrogenase activity"/>
    <property type="evidence" value="ECO:0007669"/>
    <property type="project" value="TreeGrafter"/>
</dbReference>
<dbReference type="GO" id="GO:0008924">
    <property type="term" value="F:L-malate dehydrogenase (quinone) activity"/>
    <property type="evidence" value="ECO:0007669"/>
    <property type="project" value="UniProtKB-UniRule"/>
</dbReference>
<dbReference type="GO" id="GO:0006099">
    <property type="term" value="P:tricarboxylic acid cycle"/>
    <property type="evidence" value="ECO:0007669"/>
    <property type="project" value="UniProtKB-UniRule"/>
</dbReference>
<dbReference type="FunFam" id="3.50.50.60:FF:000332">
    <property type="entry name" value="Probable malate:quinone oxidoreductase"/>
    <property type="match status" value="1"/>
</dbReference>
<dbReference type="Gene3D" id="3.30.9.10">
    <property type="entry name" value="D-Amino Acid Oxidase, subunit A, domain 2"/>
    <property type="match status" value="1"/>
</dbReference>
<dbReference type="Gene3D" id="3.50.50.60">
    <property type="entry name" value="FAD/NAD(P)-binding domain"/>
    <property type="match status" value="1"/>
</dbReference>
<dbReference type="HAMAP" id="MF_00212">
    <property type="entry name" value="MQO"/>
    <property type="match status" value="1"/>
</dbReference>
<dbReference type="InterPro" id="IPR036188">
    <property type="entry name" value="FAD/NAD-bd_sf"/>
</dbReference>
<dbReference type="InterPro" id="IPR006231">
    <property type="entry name" value="MQO"/>
</dbReference>
<dbReference type="PANTHER" id="PTHR43104">
    <property type="entry name" value="L-2-HYDROXYGLUTARATE DEHYDROGENASE, MITOCHONDRIAL"/>
    <property type="match status" value="1"/>
</dbReference>
<dbReference type="PANTHER" id="PTHR43104:SF2">
    <property type="entry name" value="L-2-HYDROXYGLUTARATE DEHYDROGENASE, MITOCHONDRIAL"/>
    <property type="match status" value="1"/>
</dbReference>
<dbReference type="Pfam" id="PF06039">
    <property type="entry name" value="Mqo"/>
    <property type="match status" value="1"/>
</dbReference>
<dbReference type="SUPFAM" id="SSF51905">
    <property type="entry name" value="FAD/NAD(P)-binding domain"/>
    <property type="match status" value="1"/>
</dbReference>
<accession>Q9ZMY5</accession>
<evidence type="ECO:0000250" key="1"/>
<evidence type="ECO:0000305" key="2"/>
<organism>
    <name type="scientific">Helicobacter pylori (strain J99 / ATCC 700824)</name>
    <name type="common">Campylobacter pylori J99</name>
    <dbReference type="NCBI Taxonomy" id="85963"/>
    <lineage>
        <taxon>Bacteria</taxon>
        <taxon>Pseudomonadati</taxon>
        <taxon>Campylobacterota</taxon>
        <taxon>Epsilonproteobacteria</taxon>
        <taxon>Campylobacterales</taxon>
        <taxon>Helicobacteraceae</taxon>
        <taxon>Helicobacter</taxon>
    </lineage>
</organism>